<feature type="chain" id="PRO_0000360709" description="HTH-type transcriptional regulator LmrA">
    <location>
        <begin position="1"/>
        <end position="188"/>
    </location>
</feature>
<feature type="domain" description="HTH tetR-type" evidence="1">
    <location>
        <begin position="4"/>
        <end position="64"/>
    </location>
</feature>
<feature type="DNA-binding region" description="H-T-H motif" evidence="1">
    <location>
        <begin position="27"/>
        <end position="46"/>
    </location>
</feature>
<evidence type="ECO:0000255" key="1">
    <source>
        <dbReference type="PROSITE-ProRule" id="PRU00335"/>
    </source>
</evidence>
<evidence type="ECO:0000269" key="2">
    <source>
    </source>
</evidence>
<evidence type="ECO:0000269" key="3">
    <source>
    </source>
</evidence>
<evidence type="ECO:0000269" key="4">
    <source>
    </source>
</evidence>
<protein>
    <recommendedName>
        <fullName>HTH-type transcriptional regulator LmrA</fullName>
    </recommendedName>
</protein>
<comment type="function">
    <text evidence="2 3 4">Acts as a repressor of the lincomycin-resistance (lmrAB) and yxaGH operons.</text>
</comment>
<keyword id="KW-0238">DNA-binding</keyword>
<keyword id="KW-1185">Reference proteome</keyword>
<keyword id="KW-0678">Repressor</keyword>
<keyword id="KW-0804">Transcription</keyword>
<keyword id="KW-0805">Transcription regulation</keyword>
<organism>
    <name type="scientific">Bacillus subtilis (strain 168)</name>
    <dbReference type="NCBI Taxonomy" id="224308"/>
    <lineage>
        <taxon>Bacteria</taxon>
        <taxon>Bacillati</taxon>
        <taxon>Bacillota</taxon>
        <taxon>Bacilli</taxon>
        <taxon>Bacillales</taxon>
        <taxon>Bacillaceae</taxon>
        <taxon>Bacillus</taxon>
    </lineage>
</organism>
<accession>O34619</accession>
<accession>Q797R9</accession>
<reference key="1">
    <citation type="journal article" date="1997" name="Microbiology">
        <title>A 32 kb nucleotide sequence from the region of the lincomycin-resistance gene (22 degrees-25 degrees) of the Bacillus subtilis chromosome and identification of the site of the lin-2 mutation.</title>
        <authorList>
            <person name="Kumano M."/>
            <person name="Tamakoshi A."/>
            <person name="Yamane K."/>
        </authorList>
    </citation>
    <scope>NUCLEOTIDE SEQUENCE [GENOMIC DNA]</scope>
    <source>
        <strain>168</strain>
    </source>
</reference>
<reference key="2">
    <citation type="journal article" date="1997" name="Nature">
        <title>The complete genome sequence of the Gram-positive bacterium Bacillus subtilis.</title>
        <authorList>
            <person name="Kunst F."/>
            <person name="Ogasawara N."/>
            <person name="Moszer I."/>
            <person name="Albertini A.M."/>
            <person name="Alloni G."/>
            <person name="Azevedo V."/>
            <person name="Bertero M.G."/>
            <person name="Bessieres P."/>
            <person name="Bolotin A."/>
            <person name="Borchert S."/>
            <person name="Borriss R."/>
            <person name="Boursier L."/>
            <person name="Brans A."/>
            <person name="Braun M."/>
            <person name="Brignell S.C."/>
            <person name="Bron S."/>
            <person name="Brouillet S."/>
            <person name="Bruschi C.V."/>
            <person name="Caldwell B."/>
            <person name="Capuano V."/>
            <person name="Carter N.M."/>
            <person name="Choi S.-K."/>
            <person name="Codani J.-J."/>
            <person name="Connerton I.F."/>
            <person name="Cummings N.J."/>
            <person name="Daniel R.A."/>
            <person name="Denizot F."/>
            <person name="Devine K.M."/>
            <person name="Duesterhoeft A."/>
            <person name="Ehrlich S.D."/>
            <person name="Emmerson P.T."/>
            <person name="Entian K.-D."/>
            <person name="Errington J."/>
            <person name="Fabret C."/>
            <person name="Ferrari E."/>
            <person name="Foulger D."/>
            <person name="Fritz C."/>
            <person name="Fujita M."/>
            <person name="Fujita Y."/>
            <person name="Fuma S."/>
            <person name="Galizzi A."/>
            <person name="Galleron N."/>
            <person name="Ghim S.-Y."/>
            <person name="Glaser P."/>
            <person name="Goffeau A."/>
            <person name="Golightly E.J."/>
            <person name="Grandi G."/>
            <person name="Guiseppi G."/>
            <person name="Guy B.J."/>
            <person name="Haga K."/>
            <person name="Haiech J."/>
            <person name="Harwood C.R."/>
            <person name="Henaut A."/>
            <person name="Hilbert H."/>
            <person name="Holsappel S."/>
            <person name="Hosono S."/>
            <person name="Hullo M.-F."/>
            <person name="Itaya M."/>
            <person name="Jones L.-M."/>
            <person name="Joris B."/>
            <person name="Karamata D."/>
            <person name="Kasahara Y."/>
            <person name="Klaerr-Blanchard M."/>
            <person name="Klein C."/>
            <person name="Kobayashi Y."/>
            <person name="Koetter P."/>
            <person name="Koningstein G."/>
            <person name="Krogh S."/>
            <person name="Kumano M."/>
            <person name="Kurita K."/>
            <person name="Lapidus A."/>
            <person name="Lardinois S."/>
            <person name="Lauber J."/>
            <person name="Lazarevic V."/>
            <person name="Lee S.-M."/>
            <person name="Levine A."/>
            <person name="Liu H."/>
            <person name="Masuda S."/>
            <person name="Mauel C."/>
            <person name="Medigue C."/>
            <person name="Medina N."/>
            <person name="Mellado R.P."/>
            <person name="Mizuno M."/>
            <person name="Moestl D."/>
            <person name="Nakai S."/>
            <person name="Noback M."/>
            <person name="Noone D."/>
            <person name="O'Reilly M."/>
            <person name="Ogawa K."/>
            <person name="Ogiwara A."/>
            <person name="Oudega B."/>
            <person name="Park S.-H."/>
            <person name="Parro V."/>
            <person name="Pohl T.M."/>
            <person name="Portetelle D."/>
            <person name="Porwollik S."/>
            <person name="Prescott A.M."/>
            <person name="Presecan E."/>
            <person name="Pujic P."/>
            <person name="Purnelle B."/>
            <person name="Rapoport G."/>
            <person name="Rey M."/>
            <person name="Reynolds S."/>
            <person name="Rieger M."/>
            <person name="Rivolta C."/>
            <person name="Rocha E."/>
            <person name="Roche B."/>
            <person name="Rose M."/>
            <person name="Sadaie Y."/>
            <person name="Sato T."/>
            <person name="Scanlan E."/>
            <person name="Schleich S."/>
            <person name="Schroeter R."/>
            <person name="Scoffone F."/>
            <person name="Sekiguchi J."/>
            <person name="Sekowska A."/>
            <person name="Seror S.J."/>
            <person name="Serror P."/>
            <person name="Shin B.-S."/>
            <person name="Soldo B."/>
            <person name="Sorokin A."/>
            <person name="Tacconi E."/>
            <person name="Takagi T."/>
            <person name="Takahashi H."/>
            <person name="Takemaru K."/>
            <person name="Takeuchi M."/>
            <person name="Tamakoshi A."/>
            <person name="Tanaka T."/>
            <person name="Terpstra P."/>
            <person name="Tognoni A."/>
            <person name="Tosato V."/>
            <person name="Uchiyama S."/>
            <person name="Vandenbol M."/>
            <person name="Vannier F."/>
            <person name="Vassarotti A."/>
            <person name="Viari A."/>
            <person name="Wambutt R."/>
            <person name="Wedler E."/>
            <person name="Wedler H."/>
            <person name="Weitzenegger T."/>
            <person name="Winters P."/>
            <person name="Wipat A."/>
            <person name="Yamamoto H."/>
            <person name="Yamane K."/>
            <person name="Yasumoto K."/>
            <person name="Yata K."/>
            <person name="Yoshida K."/>
            <person name="Yoshikawa H.-F."/>
            <person name="Zumstein E."/>
            <person name="Yoshikawa H."/>
            <person name="Danchin A."/>
        </authorList>
    </citation>
    <scope>NUCLEOTIDE SEQUENCE [LARGE SCALE GENOMIC DNA]</scope>
    <source>
        <strain>168</strain>
    </source>
</reference>
<reference key="3">
    <citation type="journal article" date="2003" name="Can. J. Microbiol.">
        <title>Multidrug resistant phenotype of Bacillus subtilis spontaneous mutants isolated in the presence of puromycin and lincomycin.</title>
        <authorList>
            <person name="Murata M."/>
            <person name="Ohno S."/>
            <person name="Kumano M."/>
            <person name="Yamane K."/>
            <person name="Ohki R."/>
        </authorList>
    </citation>
    <scope>FUNCTION</scope>
</reference>
<reference key="4">
    <citation type="journal article" date="2004" name="J. Bacteriol.">
        <title>Bacillus subtilis LmrA is a repressor of the lmrAB and yxaGH operons: identification of its binding site and functional analysis of lmrB and yxaGH.</title>
        <authorList>
            <person name="Yoshida K."/>
            <person name="Ohki Y.-H."/>
            <person name="Murata M."/>
            <person name="Kinehara M."/>
            <person name="Matsuoka H."/>
            <person name="Satomura T."/>
            <person name="Ohki R."/>
            <person name="Kumano M."/>
            <person name="Yamane K."/>
            <person name="Fujita Y."/>
        </authorList>
    </citation>
    <scope>FUNCTION</scope>
</reference>
<reference key="5">
    <citation type="journal article" date="2005" name="Microbiol. Mol. Biol. Rev.">
        <title>The TetR family of transcriptional repressors.</title>
        <authorList>
            <person name="Ramos J.L."/>
            <person name="Martinez-Bueno M."/>
            <person name="Molina-Henares A.J."/>
            <person name="Teran W."/>
            <person name="Watanabe K."/>
            <person name="Zhang X."/>
            <person name="Gallegos M.T."/>
            <person name="Brennan R."/>
            <person name="Tobes R."/>
        </authorList>
    </citation>
    <scope>REVIEW</scope>
    <scope>GENE FAMILY</scope>
</reference>
<reference key="6">
    <citation type="journal article" date="2007" name="J. Bacteriol.">
        <title>Dual regulation of the Bacillus subtilis regulon comprising the lmrAB and yxaGH operons and yxaF gene by two transcriptional repressors, LmrA and YxaF, in response to flavonoids.</title>
        <authorList>
            <person name="Hirooka K."/>
            <person name="Kunikane S."/>
            <person name="Matsuoka H."/>
            <person name="Yoshida K."/>
            <person name="Kumamoto K."/>
            <person name="Tojo S."/>
            <person name="Fujita Y."/>
        </authorList>
    </citation>
    <scope>FUNCTION</scope>
</reference>
<dbReference type="EMBL" id="AB000617">
    <property type="protein sequence ID" value="BAA22229.1"/>
    <property type="molecule type" value="Genomic_DNA"/>
</dbReference>
<dbReference type="EMBL" id="AL009126">
    <property type="protein sequence ID" value="CAB12062.1"/>
    <property type="molecule type" value="Genomic_DNA"/>
</dbReference>
<dbReference type="PIR" id="D69652">
    <property type="entry name" value="D69652"/>
</dbReference>
<dbReference type="RefSeq" id="NP_388150.1">
    <property type="nucleotide sequence ID" value="NC_000964.3"/>
</dbReference>
<dbReference type="RefSeq" id="WP_003246449.1">
    <property type="nucleotide sequence ID" value="NZ_OZ025638.1"/>
</dbReference>
<dbReference type="SMR" id="O34619"/>
<dbReference type="FunCoup" id="O34619">
    <property type="interactions" value="104"/>
</dbReference>
<dbReference type="STRING" id="224308.BSU02680"/>
<dbReference type="PaxDb" id="224308-BSU02680"/>
<dbReference type="EnsemblBacteria" id="CAB12062">
    <property type="protein sequence ID" value="CAB12062"/>
    <property type="gene ID" value="BSU_02680"/>
</dbReference>
<dbReference type="GeneID" id="938385"/>
<dbReference type="KEGG" id="bsu:BSU02680"/>
<dbReference type="PATRIC" id="fig|224308.179.peg.278"/>
<dbReference type="eggNOG" id="COG1309">
    <property type="taxonomic scope" value="Bacteria"/>
</dbReference>
<dbReference type="InParanoid" id="O34619"/>
<dbReference type="OrthoDB" id="9810023at2"/>
<dbReference type="PhylomeDB" id="O34619"/>
<dbReference type="BioCyc" id="BSUB:BSU02680-MONOMER"/>
<dbReference type="Proteomes" id="UP000001570">
    <property type="component" value="Chromosome"/>
</dbReference>
<dbReference type="GO" id="GO:0003677">
    <property type="term" value="F:DNA binding"/>
    <property type="evidence" value="ECO:0007669"/>
    <property type="project" value="UniProtKB-KW"/>
</dbReference>
<dbReference type="Gene3D" id="1.10.357.10">
    <property type="entry name" value="Tetracycline Repressor, domain 2"/>
    <property type="match status" value="1"/>
</dbReference>
<dbReference type="InterPro" id="IPR009057">
    <property type="entry name" value="Homeodomain-like_sf"/>
</dbReference>
<dbReference type="InterPro" id="IPR001647">
    <property type="entry name" value="HTH_TetR"/>
</dbReference>
<dbReference type="InterPro" id="IPR036271">
    <property type="entry name" value="Tet_transcr_reg_TetR-rel_C_sf"/>
</dbReference>
<dbReference type="InterPro" id="IPR054156">
    <property type="entry name" value="YxaF_TetR_C"/>
</dbReference>
<dbReference type="PANTHER" id="PTHR47506:SF3">
    <property type="entry name" value="HTH-TYPE TRANSCRIPTIONAL REGULATOR LMRA"/>
    <property type="match status" value="1"/>
</dbReference>
<dbReference type="PANTHER" id="PTHR47506">
    <property type="entry name" value="TRANSCRIPTIONAL REGULATORY PROTEIN"/>
    <property type="match status" value="1"/>
</dbReference>
<dbReference type="Pfam" id="PF21993">
    <property type="entry name" value="TetR_C_13_2"/>
    <property type="match status" value="1"/>
</dbReference>
<dbReference type="Pfam" id="PF00440">
    <property type="entry name" value="TetR_N"/>
    <property type="match status" value="1"/>
</dbReference>
<dbReference type="PRINTS" id="PR00455">
    <property type="entry name" value="HTHTETR"/>
</dbReference>
<dbReference type="SUPFAM" id="SSF46689">
    <property type="entry name" value="Homeodomain-like"/>
    <property type="match status" value="1"/>
</dbReference>
<dbReference type="SUPFAM" id="SSF48498">
    <property type="entry name" value="Tetracyclin repressor-like, C-terminal domain"/>
    <property type="match status" value="1"/>
</dbReference>
<dbReference type="PROSITE" id="PS50977">
    <property type="entry name" value="HTH_TETR_2"/>
    <property type="match status" value="1"/>
</dbReference>
<gene>
    <name type="primary">lmrA</name>
    <name type="synonym">yccB</name>
    <name type="ordered locus">BSU02680</name>
</gene>
<sequence length="188" mass="20663">MSYGDSREKILSAATRLFQLQGYYGTGLNQIIKESGAPKGSLYYHFPGGKEQLAIEAVNEMKEYIRQKIADCMEACTDPAEGIQAFLKELSCQFSCTEDIEGLPVGLLAAETSLKSEPLREACHEAYKEWASVYEEKLRQTGCSESRAKEASTVVNAMIEGGILLSLTAKNSTPLLHISSCIPDLLKR</sequence>
<proteinExistence type="predicted"/>
<name>LMRA_BACSU</name>